<organism>
    <name type="scientific">Torque teno sus virus 1 (isolate Sd-TTV31)</name>
    <dbReference type="NCBI Taxonomy" id="766190"/>
    <lineage>
        <taxon>Viruses</taxon>
        <taxon>Viruses incertae sedis</taxon>
        <taxon>Anelloviridae</taxon>
        <taxon>Iotatorquevirus</taxon>
        <taxon>Iotatorquevirus suida1a</taxon>
    </lineage>
</organism>
<dbReference type="EMBL" id="AB076001">
    <property type="protein sequence ID" value="BAB90848.1"/>
    <property type="molecule type" value="Genomic_DNA"/>
</dbReference>
<dbReference type="RefSeq" id="YP_003587831.1">
    <property type="nucleotide sequence ID" value="NC_014070.1"/>
</dbReference>
<dbReference type="KEGG" id="vg:9086574"/>
<dbReference type="Proteomes" id="UP000007079">
    <property type="component" value="Segment"/>
</dbReference>
<dbReference type="GO" id="GO:0039615">
    <property type="term" value="C:T=1 icosahedral viral capsid"/>
    <property type="evidence" value="ECO:0007669"/>
    <property type="project" value="UniProtKB-KW"/>
</dbReference>
<dbReference type="InterPro" id="IPR004219">
    <property type="entry name" value="TTvirus_Unk"/>
</dbReference>
<dbReference type="Pfam" id="PF02956">
    <property type="entry name" value="TT_ORF1"/>
    <property type="match status" value="1"/>
</dbReference>
<comment type="function">
    <text evidence="1">Self-assembles to form an icosahedral capsid with a T=1 symmetry, about 30 nm in diameter, and consisting of 60 capsid proteins. The capsid encapsulates the genomic DNA. Capsid protein is involved in attachment and entry into the host cell (By similarity).</text>
</comment>
<comment type="subcellular location">
    <subcellularLocation>
        <location evidence="3">Virion</location>
    </subcellularLocation>
</comment>
<comment type="similarity">
    <text evidence="3">Belongs to the anelloviridae capsid protein family.</text>
</comment>
<gene>
    <name type="ORF">ORF1</name>
</gene>
<name>CAPSD_TTVI1</name>
<sequence length="635" mass="74959">MRFRRRRFGRRRRYYRKRRGGWRRRFRIRRRRPWRRWRVRRWRRSVFRRRGRRARPYRISAWNPKVLRNCRITGWWPVIQCMDGMEWIKYKPMDLRVEANRIFDKQGSKIETEQMGYLMQYGGGWSSGVISLEGLFNENRLWRNIWSKSNDGMDLVRYFGCRIRLYPTENQGYLFWYDTEFDEQQRRMLDEYTQPSVMLQAKNSRLIVCKQKMPIRRRVKSIFIPPPAQLTTQWKFQQELCQFPLFNWACICIDMDTPFDYNGAWRNAWWLMRRLQNGNMEYIERWGRIPMTGDTELPPADDFKAGGVNKNFKPTGIQRIYPIVAVCLVEGNKRVVKWATVHNGPIDRWRKKQTGTLKLSALRRLVLRVCSESETYYKWTASEFTGAFQQDWWPVSGTEYPLCTIKMEPEFENPTVEVWSWKATIPTAGTLKDYFGLSSGQQWKDTDFGRLQLPRSSHNVDFGHKARFGPFCVKKPPVEFRDSAPNPLNIWVKYTFYFQFGGMYQPPTGIQDPCTSNPTYPVRMVGAVTHPKYAGQGGIATQIGDQGITAASLRAISAAPPNTYTQSAFLKAPETEKEEERESETSFTSAESSSEGDGSSDDQAERRAARKRVIKLLLKRLADRPVDNKRRRFSE</sequence>
<accession>Q8QVL9</accession>
<feature type="chain" id="PRO_0000404276" description="Capsid protein">
    <location>
        <begin position="1"/>
        <end position="635"/>
    </location>
</feature>
<feature type="region of interest" description="Disordered" evidence="2">
    <location>
        <begin position="571"/>
        <end position="608"/>
    </location>
</feature>
<feature type="compositionally biased region" description="Basic and acidic residues" evidence="2">
    <location>
        <begin position="573"/>
        <end position="584"/>
    </location>
</feature>
<feature type="compositionally biased region" description="Low complexity" evidence="2">
    <location>
        <begin position="585"/>
        <end position="597"/>
    </location>
</feature>
<proteinExistence type="inferred from homology"/>
<protein>
    <recommendedName>
        <fullName>Capsid protein</fullName>
    </recommendedName>
</protein>
<reference key="1">
    <citation type="journal article" date="2002" name="J. Gen. Virol.">
        <title>Genomic characterization of TT viruses (TTVs) in pigs, cats and dogs and their relatedness with species-specific TTVs in primates and tupaias.</title>
        <authorList>
            <person name="Okamoto H."/>
            <person name="Takahashi M."/>
            <person name="Nishizawa T."/>
            <person name="Tawara A."/>
            <person name="Fukai K."/>
            <person name="Muramatsu U."/>
            <person name="Naito Y."/>
            <person name="Yoshikawa A."/>
        </authorList>
    </citation>
    <scope>NUCLEOTIDE SEQUENCE [GENOMIC DNA]</scope>
</reference>
<keyword id="KW-0167">Capsid protein</keyword>
<keyword id="KW-1185">Reference proteome</keyword>
<keyword id="KW-1140">T=1 icosahedral capsid protein</keyword>
<keyword id="KW-0946">Virion</keyword>
<organismHost>
    <name type="scientific">Sus scrofa</name>
    <name type="common">Pig</name>
    <dbReference type="NCBI Taxonomy" id="9823"/>
</organismHost>
<evidence type="ECO:0000250" key="1"/>
<evidence type="ECO:0000256" key="2">
    <source>
        <dbReference type="SAM" id="MobiDB-lite"/>
    </source>
</evidence>
<evidence type="ECO:0000305" key="3"/>